<feature type="chain" id="PRO_0000318848" description="Heterogeneous nuclear ribonucleoprotein A1-like 2">
    <location>
        <begin position="1"/>
        <end position="320"/>
    </location>
</feature>
<feature type="domain" description="RRM 1" evidence="4">
    <location>
        <begin position="14"/>
        <end position="97"/>
    </location>
</feature>
<feature type="domain" description="RRM 2" evidence="4">
    <location>
        <begin position="105"/>
        <end position="184"/>
    </location>
</feature>
<feature type="region of interest" description="Globular A domain">
    <location>
        <begin position="4"/>
        <end position="94"/>
    </location>
</feature>
<feature type="region of interest" description="Globular B domain">
    <location>
        <begin position="95"/>
        <end position="185"/>
    </location>
</feature>
<feature type="region of interest" description="Disordered" evidence="5">
    <location>
        <begin position="181"/>
        <end position="216"/>
    </location>
</feature>
<feature type="region of interest" description="RNA-binding RGG-box">
    <location>
        <begin position="218"/>
        <end position="240"/>
    </location>
</feature>
<feature type="region of interest" description="Nuclear targeting sequence" evidence="1">
    <location>
        <begin position="268"/>
        <end position="305"/>
    </location>
</feature>
<feature type="region of interest" description="Disordered" evidence="5">
    <location>
        <begin position="271"/>
        <end position="320"/>
    </location>
</feature>
<feature type="compositionally biased region" description="Gly residues" evidence="5">
    <location>
        <begin position="198"/>
        <end position="216"/>
    </location>
</feature>
<feature type="compositionally biased region" description="Gly residues" evidence="5">
    <location>
        <begin position="276"/>
        <end position="294"/>
    </location>
</feature>
<feature type="compositionally biased region" description="Low complexity" evidence="5">
    <location>
        <begin position="307"/>
        <end position="320"/>
    </location>
</feature>
<feature type="modified residue" description="Phosphoserine" evidence="3">
    <location>
        <position position="6"/>
    </location>
</feature>
<feature type="modified residue" description="Phosphoserine" evidence="3">
    <location>
        <position position="22"/>
    </location>
</feature>
<feature type="modified residue" description="Asymmetric dimethylarginine; alternate" evidence="2">
    <location>
        <position position="194"/>
    </location>
</feature>
<feature type="modified residue" description="Omega-N-methylarginine; alternate" evidence="3">
    <location>
        <position position="194"/>
    </location>
</feature>
<feature type="modified residue" description="Asymmetric dimethylarginine; alternate" evidence="3">
    <location>
        <position position="206"/>
    </location>
</feature>
<feature type="modified residue" description="Omega-N-methylarginine; alternate" evidence="3">
    <location>
        <position position="206"/>
    </location>
</feature>
<feature type="modified residue" description="Asymmetric dimethylarginine; alternate" evidence="3">
    <location>
        <position position="218"/>
    </location>
</feature>
<feature type="modified residue" description="Omega-N-methylarginine; alternate" evidence="3">
    <location>
        <position position="218"/>
    </location>
</feature>
<feature type="modified residue" description="Asymmetric dimethylarginine; alternate" evidence="3">
    <location>
        <position position="225"/>
    </location>
</feature>
<feature type="modified residue" description="Omega-N-methylarginine; alternate" evidence="3">
    <location>
        <position position="225"/>
    </location>
</feature>
<feature type="modified residue" description="Omega-N-methylarginine" evidence="3">
    <location>
        <position position="284"/>
    </location>
</feature>
<feature type="modified residue" description="N6-acetyllysine" evidence="3">
    <location>
        <position position="298"/>
    </location>
</feature>
<feature type="sequence variant" id="VAR_038904" description="In dbSNP:rs9536212.">
    <original>N</original>
    <variation>D</variation>
    <location>
        <position position="215"/>
    </location>
</feature>
<feature type="sequence conflict" description="In Ref. 4; AAI08267." evidence="6" ref="4">
    <original>Y</original>
    <variation>C</variation>
    <location>
        <position position="289"/>
    </location>
</feature>
<protein>
    <recommendedName>
        <fullName>Heterogeneous nuclear ribonucleoprotein A1-like 2</fullName>
        <shortName>hnRNP A1-like 2</shortName>
    </recommendedName>
    <alternativeName>
        <fullName>hnRNP core protein A1-like 2</fullName>
    </alternativeName>
</protein>
<dbReference type="EMBL" id="AK123159">
    <property type="status" value="NOT_ANNOTATED_CDS"/>
    <property type="molecule type" value="mRNA"/>
</dbReference>
<dbReference type="EMBL" id="AL137058">
    <property type="status" value="NOT_ANNOTATED_CDS"/>
    <property type="molecule type" value="Genomic_DNA"/>
</dbReference>
<dbReference type="EMBL" id="CH471124">
    <property type="protein sequence ID" value="EAW52041.1"/>
    <property type="molecule type" value="Genomic_DNA"/>
</dbReference>
<dbReference type="EMBL" id="BC108266">
    <property type="protein sequence ID" value="AAI08267.1"/>
    <property type="molecule type" value="mRNA"/>
</dbReference>
<dbReference type="CCDS" id="CCDS31980.1"/>
<dbReference type="RefSeq" id="NP_001011724.1">
    <property type="nucleotide sequence ID" value="NM_001011724.3"/>
</dbReference>
<dbReference type="RefSeq" id="NP_001011725.1">
    <property type="nucleotide sequence ID" value="NM_001011725.3"/>
</dbReference>
<dbReference type="RefSeq" id="NP_001376249.1">
    <property type="nucleotide sequence ID" value="NM_001389320.1"/>
</dbReference>
<dbReference type="SMR" id="Q32P51"/>
<dbReference type="BioGRID" id="126887">
    <property type="interactions" value="155"/>
</dbReference>
<dbReference type="FunCoup" id="Q32P51">
    <property type="interactions" value="535"/>
</dbReference>
<dbReference type="IntAct" id="Q32P51">
    <property type="interactions" value="89"/>
</dbReference>
<dbReference type="MINT" id="Q32P51"/>
<dbReference type="STRING" id="9606.ENSP00000350090"/>
<dbReference type="GlyCosmos" id="Q32P51">
    <property type="glycosylation" value="2 sites, 1 glycan"/>
</dbReference>
<dbReference type="GlyGen" id="Q32P51">
    <property type="glycosylation" value="2 sites, 1 O-linked glycan (2 sites)"/>
</dbReference>
<dbReference type="iPTMnet" id="Q32P51"/>
<dbReference type="PhosphoSitePlus" id="Q32P51"/>
<dbReference type="SwissPalm" id="Q32P51"/>
<dbReference type="BioMuta" id="HNRNPA1L2"/>
<dbReference type="DMDM" id="190356061"/>
<dbReference type="jPOST" id="Q32P51"/>
<dbReference type="MassIVE" id="Q32P51"/>
<dbReference type="PaxDb" id="9606-ENSP00000350090"/>
<dbReference type="PeptideAtlas" id="Q32P51"/>
<dbReference type="PRIDE" id="Q32P51"/>
<dbReference type="ProteomicsDB" id="61627"/>
<dbReference type="Pumba" id="Q32P51"/>
<dbReference type="Antibodypedia" id="35162">
    <property type="antibodies" value="30 antibodies from 12 providers"/>
</dbReference>
<dbReference type="DNASU" id="144983"/>
<dbReference type="Ensembl" id="ENST00000357495.5">
    <property type="protein sequence ID" value="ENSP00000350090.2"/>
    <property type="gene ID" value="ENSG00000139675.13"/>
</dbReference>
<dbReference type="GeneID" id="144983"/>
<dbReference type="KEGG" id="hsa:144983"/>
<dbReference type="MANE-Select" id="ENST00000357495.5">
    <property type="protein sequence ID" value="ENSP00000350090.2"/>
    <property type="RefSeq nucleotide sequence ID" value="NM_001389320.1"/>
    <property type="RefSeq protein sequence ID" value="NP_001376249.1"/>
</dbReference>
<dbReference type="UCSC" id="uc021rjy.3">
    <property type="organism name" value="human"/>
</dbReference>
<dbReference type="AGR" id="HGNC:27067"/>
<dbReference type="CTD" id="144983"/>
<dbReference type="GeneCards" id="HNRNPA1L2"/>
<dbReference type="HGNC" id="HGNC:27067">
    <property type="gene designation" value="HNRNPA1L2"/>
</dbReference>
<dbReference type="HPA" id="ENSG00000139675">
    <property type="expression patterns" value="Low tissue specificity"/>
</dbReference>
<dbReference type="neXtProt" id="NX_Q32P51"/>
<dbReference type="PharmGKB" id="PA164720701"/>
<dbReference type="VEuPathDB" id="HostDB:ENSG00000139675"/>
<dbReference type="eggNOG" id="KOG0118">
    <property type="taxonomic scope" value="Eukaryota"/>
</dbReference>
<dbReference type="GeneTree" id="ENSGT00950000183123"/>
<dbReference type="HOGENOM" id="CLU_012062_1_0_1"/>
<dbReference type="InParanoid" id="Q32P51"/>
<dbReference type="OMA" id="THTVNGH"/>
<dbReference type="OrthoDB" id="6019873at2759"/>
<dbReference type="PAN-GO" id="Q32P51">
    <property type="GO annotations" value="3 GO annotations based on evolutionary models"/>
</dbReference>
<dbReference type="PhylomeDB" id="Q32P51"/>
<dbReference type="TreeFam" id="TF351342"/>
<dbReference type="PathwayCommons" id="Q32P51"/>
<dbReference type="SignaLink" id="Q32P51"/>
<dbReference type="BioGRID-ORCS" id="144983">
    <property type="hits" value="82 hits in 1059 CRISPR screens"/>
</dbReference>
<dbReference type="CD-CODE" id="1A18FFC4">
    <property type="entry name" value="Paraspeckle"/>
</dbReference>
<dbReference type="CD-CODE" id="552B0C4E">
    <property type="entry name" value="Synthetic Condensate 000091"/>
</dbReference>
<dbReference type="CD-CODE" id="91857CE7">
    <property type="entry name" value="Nucleolus"/>
</dbReference>
<dbReference type="ChiTaRS" id="HNRNPA1L2">
    <property type="organism name" value="human"/>
</dbReference>
<dbReference type="GenomeRNAi" id="144983"/>
<dbReference type="Pharos" id="Q32P51">
    <property type="development level" value="Tdark"/>
</dbReference>
<dbReference type="PRO" id="PR:Q32P51"/>
<dbReference type="Proteomes" id="UP000005640">
    <property type="component" value="Chromosome 13"/>
</dbReference>
<dbReference type="RNAct" id="Q32P51">
    <property type="molecule type" value="protein"/>
</dbReference>
<dbReference type="Bgee" id="ENSG00000139675">
    <property type="expression patterns" value="Expressed in ganglionic eminence and 98 other cell types or tissues"/>
</dbReference>
<dbReference type="ExpressionAtlas" id="Q32P51">
    <property type="expression patterns" value="baseline and differential"/>
</dbReference>
<dbReference type="GO" id="GO:0071013">
    <property type="term" value="C:catalytic step 2 spliceosome"/>
    <property type="evidence" value="ECO:0000318"/>
    <property type="project" value="GO_Central"/>
</dbReference>
<dbReference type="GO" id="GO:0005737">
    <property type="term" value="C:cytoplasm"/>
    <property type="evidence" value="ECO:0007669"/>
    <property type="project" value="UniProtKB-SubCell"/>
</dbReference>
<dbReference type="GO" id="GO:0003723">
    <property type="term" value="F:RNA binding"/>
    <property type="evidence" value="ECO:0007669"/>
    <property type="project" value="UniProtKB-KW"/>
</dbReference>
<dbReference type="GO" id="GO:0000398">
    <property type="term" value="P:mRNA splicing, via spliceosome"/>
    <property type="evidence" value="ECO:0000318"/>
    <property type="project" value="GO_Central"/>
</dbReference>
<dbReference type="GO" id="GO:0051028">
    <property type="term" value="P:mRNA transport"/>
    <property type="evidence" value="ECO:0007669"/>
    <property type="project" value="UniProtKB-KW"/>
</dbReference>
<dbReference type="CDD" id="cd12761">
    <property type="entry name" value="RRM1_hnRNPA1"/>
    <property type="match status" value="1"/>
</dbReference>
<dbReference type="FunFam" id="3.30.70.330:FF:000048">
    <property type="entry name" value="Heterogeneous nuclear ribonucleoprotein a1 isoform"/>
    <property type="match status" value="1"/>
</dbReference>
<dbReference type="FunFam" id="3.30.70.330:FF:000429">
    <property type="entry name" value="Heterogeneous nuclear ribonucleoprotein A1-like 2"/>
    <property type="match status" value="1"/>
</dbReference>
<dbReference type="Gene3D" id="3.30.70.330">
    <property type="match status" value="2"/>
</dbReference>
<dbReference type="InterPro" id="IPR021662">
    <property type="entry name" value="HnRNPA1/A2_C"/>
</dbReference>
<dbReference type="InterPro" id="IPR034845">
    <property type="entry name" value="hnRNPA1_RRM1"/>
</dbReference>
<dbReference type="InterPro" id="IPR012677">
    <property type="entry name" value="Nucleotide-bd_a/b_plait_sf"/>
</dbReference>
<dbReference type="InterPro" id="IPR035979">
    <property type="entry name" value="RBD_domain_sf"/>
</dbReference>
<dbReference type="InterPro" id="IPR000504">
    <property type="entry name" value="RRM_dom"/>
</dbReference>
<dbReference type="PANTHER" id="PTHR48026:SF2">
    <property type="entry name" value="HETEROGENEOUS NUCLEAR RIBONUCLEOPROTEIN A1-RELATED"/>
    <property type="match status" value="1"/>
</dbReference>
<dbReference type="PANTHER" id="PTHR48026">
    <property type="entry name" value="HOMOLOGOUS TO DROSOPHILA SQD (SQUID) PROTEIN"/>
    <property type="match status" value="1"/>
</dbReference>
<dbReference type="Pfam" id="PF11627">
    <property type="entry name" value="HnRNPA1_LC"/>
    <property type="match status" value="1"/>
</dbReference>
<dbReference type="Pfam" id="PF00076">
    <property type="entry name" value="RRM_1"/>
    <property type="match status" value="2"/>
</dbReference>
<dbReference type="SMART" id="SM00360">
    <property type="entry name" value="RRM"/>
    <property type="match status" value="2"/>
</dbReference>
<dbReference type="SUPFAM" id="SSF54928">
    <property type="entry name" value="RNA-binding domain, RBD"/>
    <property type="match status" value="2"/>
</dbReference>
<dbReference type="PROSITE" id="PS50102">
    <property type="entry name" value="RRM"/>
    <property type="match status" value="2"/>
</dbReference>
<organism>
    <name type="scientific">Homo sapiens</name>
    <name type="common">Human</name>
    <dbReference type="NCBI Taxonomy" id="9606"/>
    <lineage>
        <taxon>Eukaryota</taxon>
        <taxon>Metazoa</taxon>
        <taxon>Chordata</taxon>
        <taxon>Craniata</taxon>
        <taxon>Vertebrata</taxon>
        <taxon>Euteleostomi</taxon>
        <taxon>Mammalia</taxon>
        <taxon>Eutheria</taxon>
        <taxon>Euarchontoglires</taxon>
        <taxon>Primates</taxon>
        <taxon>Haplorrhini</taxon>
        <taxon>Catarrhini</taxon>
        <taxon>Hominidae</taxon>
        <taxon>Homo</taxon>
    </lineage>
</organism>
<gene>
    <name type="primary">HNRNPA1L2</name>
    <name type="synonym">HNRNPA1L</name>
</gene>
<evidence type="ECO:0000250" key="1"/>
<evidence type="ECO:0000250" key="2">
    <source>
        <dbReference type="UniProtKB" id="P09867"/>
    </source>
</evidence>
<evidence type="ECO:0000250" key="3">
    <source>
        <dbReference type="UniProtKB" id="P49312"/>
    </source>
</evidence>
<evidence type="ECO:0000255" key="4">
    <source>
        <dbReference type="PROSITE-ProRule" id="PRU00176"/>
    </source>
</evidence>
<evidence type="ECO:0000256" key="5">
    <source>
        <dbReference type="SAM" id="MobiDB-lite"/>
    </source>
</evidence>
<evidence type="ECO:0000305" key="6"/>
<comment type="function">
    <text evidence="1">Involved in the packaging of pre-mRNA into hnRNP particles, transport of poly(A) mRNA from the nucleus to the cytoplasm and may modulate splice site selection.</text>
</comment>
<comment type="interaction">
    <interactant intactId="EBI-2556580">
        <id>Q32P51</id>
    </interactant>
    <interactant intactId="EBI-352662">
        <id>P09651</id>
        <label>HNRNPA1</label>
    </interactant>
    <organismsDiffer>false</organismsDiffer>
    <experiments>2</experiments>
</comment>
<comment type="subcellular location">
    <subcellularLocation>
        <location evidence="1">Nucleus</location>
    </subcellularLocation>
    <subcellularLocation>
        <location evidence="1">Cytoplasm</location>
    </subcellularLocation>
</comment>
<sequence>MSKSASPKEPEQLRKLFIGGLSFETTDESLRSHFEQWGTLTDCVVMRDPNTKRSRGFGFVTYATVEEVDAAMNTTPHKVDGRVVEPKRAVSREDSQRPGAHLTVKKIFVGGIKEDTEEHHLRDYFEQYGKIEVIEIMTDRGSGKKRGFAFVTFDDHDSVDKIVIQKYHTVKGHNCEVRKALPKQEMASASSSQRGRRGSGNFGGGRGDGFGGNDNFGRGGNFSGRGGFGGSCGGGGYGGSGDGYNGFGNDGSNFGGGGSYNDFGNYNNQSSNFGPMKGGNFGGRSSGPYGGGGQYFAKPQNQGGYGVSSSSSSYGSGRRF</sequence>
<keyword id="KW-0007">Acetylation</keyword>
<keyword id="KW-0963">Cytoplasm</keyword>
<keyword id="KW-0488">Methylation</keyword>
<keyword id="KW-0507">mRNA processing</keyword>
<keyword id="KW-0508">mRNA splicing</keyword>
<keyword id="KW-0509">mRNA transport</keyword>
<keyword id="KW-0539">Nucleus</keyword>
<keyword id="KW-0597">Phosphoprotein</keyword>
<keyword id="KW-1267">Proteomics identification</keyword>
<keyword id="KW-1185">Reference proteome</keyword>
<keyword id="KW-0677">Repeat</keyword>
<keyword id="KW-0687">Ribonucleoprotein</keyword>
<keyword id="KW-0694">RNA-binding</keyword>
<keyword id="KW-0747">Spliceosome</keyword>
<keyword id="KW-0813">Transport</keyword>
<reference key="1">
    <citation type="journal article" date="2004" name="Nat. Genet.">
        <title>Complete sequencing and characterization of 21,243 full-length human cDNAs.</title>
        <authorList>
            <person name="Ota T."/>
            <person name="Suzuki Y."/>
            <person name="Nishikawa T."/>
            <person name="Otsuki T."/>
            <person name="Sugiyama T."/>
            <person name="Irie R."/>
            <person name="Wakamatsu A."/>
            <person name="Hayashi K."/>
            <person name="Sato H."/>
            <person name="Nagai K."/>
            <person name="Kimura K."/>
            <person name="Makita H."/>
            <person name="Sekine M."/>
            <person name="Obayashi M."/>
            <person name="Nishi T."/>
            <person name="Shibahara T."/>
            <person name="Tanaka T."/>
            <person name="Ishii S."/>
            <person name="Yamamoto J."/>
            <person name="Saito K."/>
            <person name="Kawai Y."/>
            <person name="Isono Y."/>
            <person name="Nakamura Y."/>
            <person name="Nagahari K."/>
            <person name="Murakami K."/>
            <person name="Yasuda T."/>
            <person name="Iwayanagi T."/>
            <person name="Wagatsuma M."/>
            <person name="Shiratori A."/>
            <person name="Sudo H."/>
            <person name="Hosoiri T."/>
            <person name="Kaku Y."/>
            <person name="Kodaira H."/>
            <person name="Kondo H."/>
            <person name="Sugawara M."/>
            <person name="Takahashi M."/>
            <person name="Kanda K."/>
            <person name="Yokoi T."/>
            <person name="Furuya T."/>
            <person name="Kikkawa E."/>
            <person name="Omura Y."/>
            <person name="Abe K."/>
            <person name="Kamihara K."/>
            <person name="Katsuta N."/>
            <person name="Sato K."/>
            <person name="Tanikawa M."/>
            <person name="Yamazaki M."/>
            <person name="Ninomiya K."/>
            <person name="Ishibashi T."/>
            <person name="Yamashita H."/>
            <person name="Murakawa K."/>
            <person name="Fujimori K."/>
            <person name="Tanai H."/>
            <person name="Kimata M."/>
            <person name="Watanabe M."/>
            <person name="Hiraoka S."/>
            <person name="Chiba Y."/>
            <person name="Ishida S."/>
            <person name="Ono Y."/>
            <person name="Takiguchi S."/>
            <person name="Watanabe S."/>
            <person name="Yosida M."/>
            <person name="Hotuta T."/>
            <person name="Kusano J."/>
            <person name="Kanehori K."/>
            <person name="Takahashi-Fujii A."/>
            <person name="Hara H."/>
            <person name="Tanase T.-O."/>
            <person name="Nomura Y."/>
            <person name="Togiya S."/>
            <person name="Komai F."/>
            <person name="Hara R."/>
            <person name="Takeuchi K."/>
            <person name="Arita M."/>
            <person name="Imose N."/>
            <person name="Musashino K."/>
            <person name="Yuuki H."/>
            <person name="Oshima A."/>
            <person name="Sasaki N."/>
            <person name="Aotsuka S."/>
            <person name="Yoshikawa Y."/>
            <person name="Matsunawa H."/>
            <person name="Ichihara T."/>
            <person name="Shiohata N."/>
            <person name="Sano S."/>
            <person name="Moriya S."/>
            <person name="Momiyama H."/>
            <person name="Satoh N."/>
            <person name="Takami S."/>
            <person name="Terashima Y."/>
            <person name="Suzuki O."/>
            <person name="Nakagawa S."/>
            <person name="Senoh A."/>
            <person name="Mizoguchi H."/>
            <person name="Goto Y."/>
            <person name="Shimizu F."/>
            <person name="Wakebe H."/>
            <person name="Hishigaki H."/>
            <person name="Watanabe T."/>
            <person name="Sugiyama A."/>
            <person name="Takemoto M."/>
            <person name="Kawakami B."/>
            <person name="Yamazaki M."/>
            <person name="Watanabe K."/>
            <person name="Kumagai A."/>
            <person name="Itakura S."/>
            <person name="Fukuzumi Y."/>
            <person name="Fujimori Y."/>
            <person name="Komiyama M."/>
            <person name="Tashiro H."/>
            <person name="Tanigami A."/>
            <person name="Fujiwara T."/>
            <person name="Ono T."/>
            <person name="Yamada K."/>
            <person name="Fujii Y."/>
            <person name="Ozaki K."/>
            <person name="Hirao M."/>
            <person name="Ohmori Y."/>
            <person name="Kawabata A."/>
            <person name="Hikiji T."/>
            <person name="Kobatake N."/>
            <person name="Inagaki H."/>
            <person name="Ikema Y."/>
            <person name="Okamoto S."/>
            <person name="Okitani R."/>
            <person name="Kawakami T."/>
            <person name="Noguchi S."/>
            <person name="Itoh T."/>
            <person name="Shigeta K."/>
            <person name="Senba T."/>
            <person name="Matsumura K."/>
            <person name="Nakajima Y."/>
            <person name="Mizuno T."/>
            <person name="Morinaga M."/>
            <person name="Sasaki M."/>
            <person name="Togashi T."/>
            <person name="Oyama M."/>
            <person name="Hata H."/>
            <person name="Watanabe M."/>
            <person name="Komatsu T."/>
            <person name="Mizushima-Sugano J."/>
            <person name="Satoh T."/>
            <person name="Shirai Y."/>
            <person name="Takahashi Y."/>
            <person name="Nakagawa K."/>
            <person name="Okumura K."/>
            <person name="Nagase T."/>
            <person name="Nomura N."/>
            <person name="Kikuchi H."/>
            <person name="Masuho Y."/>
            <person name="Yamashita R."/>
            <person name="Nakai K."/>
            <person name="Yada T."/>
            <person name="Nakamura Y."/>
            <person name="Ohara O."/>
            <person name="Isogai T."/>
            <person name="Sugano S."/>
        </authorList>
    </citation>
    <scope>NUCLEOTIDE SEQUENCE [LARGE SCALE MRNA]</scope>
    <source>
        <tissue>Cerebellum</tissue>
    </source>
</reference>
<reference key="2">
    <citation type="journal article" date="2004" name="Nature">
        <title>The DNA sequence and analysis of human chromosome 13.</title>
        <authorList>
            <person name="Dunham A."/>
            <person name="Matthews L.H."/>
            <person name="Burton J."/>
            <person name="Ashurst J.L."/>
            <person name="Howe K.L."/>
            <person name="Ashcroft K.J."/>
            <person name="Beare D.M."/>
            <person name="Burford D.C."/>
            <person name="Hunt S.E."/>
            <person name="Griffiths-Jones S."/>
            <person name="Jones M.C."/>
            <person name="Keenan S.J."/>
            <person name="Oliver K."/>
            <person name="Scott C.E."/>
            <person name="Ainscough R."/>
            <person name="Almeida J.P."/>
            <person name="Ambrose K.D."/>
            <person name="Andrews D.T."/>
            <person name="Ashwell R.I.S."/>
            <person name="Babbage A.K."/>
            <person name="Bagguley C.L."/>
            <person name="Bailey J."/>
            <person name="Bannerjee R."/>
            <person name="Barlow K.F."/>
            <person name="Bates K."/>
            <person name="Beasley H."/>
            <person name="Bird C.P."/>
            <person name="Bray-Allen S."/>
            <person name="Brown A.J."/>
            <person name="Brown J.Y."/>
            <person name="Burrill W."/>
            <person name="Carder C."/>
            <person name="Carter N.P."/>
            <person name="Chapman J.C."/>
            <person name="Clamp M.E."/>
            <person name="Clark S.Y."/>
            <person name="Clarke G."/>
            <person name="Clee C.M."/>
            <person name="Clegg S.C."/>
            <person name="Cobley V."/>
            <person name="Collins J.E."/>
            <person name="Corby N."/>
            <person name="Coville G.J."/>
            <person name="Deloukas P."/>
            <person name="Dhami P."/>
            <person name="Dunham I."/>
            <person name="Dunn M."/>
            <person name="Earthrowl M.E."/>
            <person name="Ellington A.G."/>
            <person name="Faulkner L."/>
            <person name="Frankish A.G."/>
            <person name="Frankland J."/>
            <person name="French L."/>
            <person name="Garner P."/>
            <person name="Garnett J."/>
            <person name="Gilbert J.G.R."/>
            <person name="Gilson C.J."/>
            <person name="Ghori J."/>
            <person name="Grafham D.V."/>
            <person name="Gribble S.M."/>
            <person name="Griffiths C."/>
            <person name="Hall R.E."/>
            <person name="Hammond S."/>
            <person name="Harley J.L."/>
            <person name="Hart E.A."/>
            <person name="Heath P.D."/>
            <person name="Howden P.J."/>
            <person name="Huckle E.J."/>
            <person name="Hunt P.J."/>
            <person name="Hunt A.R."/>
            <person name="Johnson C."/>
            <person name="Johnson D."/>
            <person name="Kay M."/>
            <person name="Kimberley A.M."/>
            <person name="King A."/>
            <person name="Laird G.K."/>
            <person name="Langford C.J."/>
            <person name="Lawlor S."/>
            <person name="Leongamornlert D.A."/>
            <person name="Lloyd D.M."/>
            <person name="Lloyd C."/>
            <person name="Loveland J.E."/>
            <person name="Lovell J."/>
            <person name="Martin S."/>
            <person name="Mashreghi-Mohammadi M."/>
            <person name="McLaren S.J."/>
            <person name="McMurray A."/>
            <person name="Milne S."/>
            <person name="Moore M.J.F."/>
            <person name="Nickerson T."/>
            <person name="Palmer S.A."/>
            <person name="Pearce A.V."/>
            <person name="Peck A.I."/>
            <person name="Pelan S."/>
            <person name="Phillimore B."/>
            <person name="Porter K.M."/>
            <person name="Rice C.M."/>
            <person name="Searle S."/>
            <person name="Sehra H.K."/>
            <person name="Shownkeen R."/>
            <person name="Skuce C.D."/>
            <person name="Smith M."/>
            <person name="Steward C.A."/>
            <person name="Sycamore N."/>
            <person name="Tester J."/>
            <person name="Thomas D.W."/>
            <person name="Tracey A."/>
            <person name="Tromans A."/>
            <person name="Tubby B."/>
            <person name="Wall M."/>
            <person name="Wallis J.M."/>
            <person name="West A.P."/>
            <person name="Whitehead S.L."/>
            <person name="Willey D.L."/>
            <person name="Wilming L."/>
            <person name="Wray P.W."/>
            <person name="Wright M.W."/>
            <person name="Young L."/>
            <person name="Coulson A."/>
            <person name="Durbin R.M."/>
            <person name="Hubbard T."/>
            <person name="Sulston J.E."/>
            <person name="Beck S."/>
            <person name="Bentley D.R."/>
            <person name="Rogers J."/>
            <person name="Ross M.T."/>
        </authorList>
    </citation>
    <scope>NUCLEOTIDE SEQUENCE [LARGE SCALE GENOMIC DNA]</scope>
</reference>
<reference key="3">
    <citation type="submission" date="2005-07" db="EMBL/GenBank/DDBJ databases">
        <authorList>
            <person name="Mural R.J."/>
            <person name="Istrail S."/>
            <person name="Sutton G.G."/>
            <person name="Florea L."/>
            <person name="Halpern A.L."/>
            <person name="Mobarry C.M."/>
            <person name="Lippert R."/>
            <person name="Walenz B."/>
            <person name="Shatkay H."/>
            <person name="Dew I."/>
            <person name="Miller J.R."/>
            <person name="Flanigan M.J."/>
            <person name="Edwards N.J."/>
            <person name="Bolanos R."/>
            <person name="Fasulo D."/>
            <person name="Halldorsson B.V."/>
            <person name="Hannenhalli S."/>
            <person name="Turner R."/>
            <person name="Yooseph S."/>
            <person name="Lu F."/>
            <person name="Nusskern D.R."/>
            <person name="Shue B.C."/>
            <person name="Zheng X.H."/>
            <person name="Zhong F."/>
            <person name="Delcher A.L."/>
            <person name="Huson D.H."/>
            <person name="Kravitz S.A."/>
            <person name="Mouchard L."/>
            <person name="Reinert K."/>
            <person name="Remington K.A."/>
            <person name="Clark A.G."/>
            <person name="Waterman M.S."/>
            <person name="Eichler E.E."/>
            <person name="Adams M.D."/>
            <person name="Hunkapiller M.W."/>
            <person name="Myers E.W."/>
            <person name="Venter J.C."/>
        </authorList>
    </citation>
    <scope>NUCLEOTIDE SEQUENCE [LARGE SCALE GENOMIC DNA]</scope>
</reference>
<reference key="4">
    <citation type="journal article" date="2004" name="Genome Res.">
        <title>The status, quality, and expansion of the NIH full-length cDNA project: the Mammalian Gene Collection (MGC).</title>
        <authorList>
            <consortium name="The MGC Project Team"/>
        </authorList>
    </citation>
    <scope>NUCLEOTIDE SEQUENCE [LARGE SCALE MRNA]</scope>
    <source>
        <tissue>Skin</tissue>
    </source>
</reference>
<proteinExistence type="evidence at protein level"/>
<name>RA1L2_HUMAN</name>
<accession>Q32P51</accession>
<accession>Q5TBS2</accession>